<dbReference type="EC" id="1.1.5.4" evidence="1"/>
<dbReference type="EMBL" id="CP001283">
    <property type="protein sequence ID" value="ACK90067.1"/>
    <property type="molecule type" value="Genomic_DNA"/>
</dbReference>
<dbReference type="RefSeq" id="WP_000069158.1">
    <property type="nucleotide sequence ID" value="NC_011773.1"/>
</dbReference>
<dbReference type="SMR" id="B7JSX2"/>
<dbReference type="KEGG" id="bcu:BCAH820_2970"/>
<dbReference type="HOGENOM" id="CLU_028151_0_0_9"/>
<dbReference type="UniPathway" id="UPA00223">
    <property type="reaction ID" value="UER01008"/>
</dbReference>
<dbReference type="Proteomes" id="UP000001363">
    <property type="component" value="Chromosome"/>
</dbReference>
<dbReference type="GO" id="GO:0047545">
    <property type="term" value="F:2-hydroxyglutarate dehydrogenase activity"/>
    <property type="evidence" value="ECO:0007669"/>
    <property type="project" value="TreeGrafter"/>
</dbReference>
<dbReference type="GO" id="GO:0008924">
    <property type="term" value="F:L-malate dehydrogenase (quinone) activity"/>
    <property type="evidence" value="ECO:0007669"/>
    <property type="project" value="UniProtKB-UniRule"/>
</dbReference>
<dbReference type="GO" id="GO:0006099">
    <property type="term" value="P:tricarboxylic acid cycle"/>
    <property type="evidence" value="ECO:0007669"/>
    <property type="project" value="UniProtKB-UniRule"/>
</dbReference>
<dbReference type="HAMAP" id="MF_00212">
    <property type="entry name" value="MQO"/>
    <property type="match status" value="1"/>
</dbReference>
<dbReference type="InterPro" id="IPR036188">
    <property type="entry name" value="FAD/NAD-bd_sf"/>
</dbReference>
<dbReference type="InterPro" id="IPR006231">
    <property type="entry name" value="MQO"/>
</dbReference>
<dbReference type="NCBIfam" id="TIGR01320">
    <property type="entry name" value="mal_quin_oxido"/>
    <property type="match status" value="1"/>
</dbReference>
<dbReference type="NCBIfam" id="NF003603">
    <property type="entry name" value="PRK05257.1-1"/>
    <property type="match status" value="1"/>
</dbReference>
<dbReference type="NCBIfam" id="NF003604">
    <property type="entry name" value="PRK05257.1-3"/>
    <property type="match status" value="1"/>
</dbReference>
<dbReference type="NCBIfam" id="NF003605">
    <property type="entry name" value="PRK05257.1-4"/>
    <property type="match status" value="1"/>
</dbReference>
<dbReference type="NCBIfam" id="NF003606">
    <property type="entry name" value="PRK05257.2-1"/>
    <property type="match status" value="1"/>
</dbReference>
<dbReference type="NCBIfam" id="NF003608">
    <property type="entry name" value="PRK05257.2-4"/>
    <property type="match status" value="1"/>
</dbReference>
<dbReference type="NCBIfam" id="NF003610">
    <property type="entry name" value="PRK05257.3-1"/>
    <property type="match status" value="1"/>
</dbReference>
<dbReference type="NCBIfam" id="NF003611">
    <property type="entry name" value="PRK05257.3-2"/>
    <property type="match status" value="1"/>
</dbReference>
<dbReference type="NCBIfam" id="NF009875">
    <property type="entry name" value="PRK13339.1"/>
    <property type="match status" value="1"/>
</dbReference>
<dbReference type="PANTHER" id="PTHR43104">
    <property type="entry name" value="L-2-HYDROXYGLUTARATE DEHYDROGENASE, MITOCHONDRIAL"/>
    <property type="match status" value="1"/>
</dbReference>
<dbReference type="PANTHER" id="PTHR43104:SF2">
    <property type="entry name" value="L-2-HYDROXYGLUTARATE DEHYDROGENASE, MITOCHONDRIAL"/>
    <property type="match status" value="1"/>
</dbReference>
<dbReference type="Pfam" id="PF06039">
    <property type="entry name" value="Mqo"/>
    <property type="match status" value="1"/>
</dbReference>
<dbReference type="SUPFAM" id="SSF51905">
    <property type="entry name" value="FAD/NAD(P)-binding domain"/>
    <property type="match status" value="1"/>
</dbReference>
<proteinExistence type="inferred from homology"/>
<protein>
    <recommendedName>
        <fullName evidence="1">Probable malate:quinone oxidoreductase</fullName>
        <ecNumber evidence="1">1.1.5.4</ecNumber>
    </recommendedName>
    <alternativeName>
        <fullName evidence="1">MQO</fullName>
    </alternativeName>
    <alternativeName>
        <fullName evidence="1">Malate dehydrogenase [quinone]</fullName>
    </alternativeName>
</protein>
<accession>B7JSX2</accession>
<evidence type="ECO:0000255" key="1">
    <source>
        <dbReference type="HAMAP-Rule" id="MF_00212"/>
    </source>
</evidence>
<name>MQO_BACC0</name>
<keyword id="KW-0274">FAD</keyword>
<keyword id="KW-0285">Flavoprotein</keyword>
<keyword id="KW-0560">Oxidoreductase</keyword>
<keyword id="KW-0816">Tricarboxylic acid cycle</keyword>
<reference key="1">
    <citation type="submission" date="2008-10" db="EMBL/GenBank/DDBJ databases">
        <title>Genome sequence of Bacillus cereus AH820.</title>
        <authorList>
            <person name="Dodson R.J."/>
            <person name="Durkin A.S."/>
            <person name="Rosovitz M.J."/>
            <person name="Rasko D.A."/>
            <person name="Hoffmaster A."/>
            <person name="Ravel J."/>
            <person name="Sutton G."/>
        </authorList>
    </citation>
    <scope>NUCLEOTIDE SEQUENCE [LARGE SCALE GENOMIC DNA]</scope>
    <source>
        <strain>AH820</strain>
    </source>
</reference>
<sequence length="500" mass="55181">MSNMQQKTDVILIGAGIMSATLGSLLKELAPEWEIKVFEKLASAGEESSNEWNNAGTGHSALCELNYTSEKSDGSIDISKAVKVNEQFQLSRQFWAYLVKSKLIRNPQDFIMPLPHMSLVQGEKNVEFLKNRFEALSKNPLFQGMEFSDAPETLKKWLPLIMEGRTSNEPMAATKIDSGTDVNFGALTRMLFDYLKTKDVELNYKHSVENIKRTKNGLWEVKVHDMNSGKIEHHTAKFVFIGGGGGSLPLLQKTGIPESKHIGGFPVSGLFMVCKNQKVVEQHHAKVYGKAKVGAPPMSVPHLDTRYIDNKKALLFGPFAGFSPKFLKTGSNLDLIGSVKPNNVLTMLAAGVKEMGLTKYLIQQVMLSHEKRMEELREFIPNAKSEDWDIVVAGQRVQVIKDTDAGGKGTLQFGTEVVSAADGSIAALLGASPGASTAVHVMLEVLEKCFPSRMVEWEGKIKEMIPSYGISLTENPRLFQDLHTSTGRTLGLNEKETVHN</sequence>
<organism>
    <name type="scientific">Bacillus cereus (strain AH820)</name>
    <dbReference type="NCBI Taxonomy" id="405535"/>
    <lineage>
        <taxon>Bacteria</taxon>
        <taxon>Bacillati</taxon>
        <taxon>Bacillota</taxon>
        <taxon>Bacilli</taxon>
        <taxon>Bacillales</taxon>
        <taxon>Bacillaceae</taxon>
        <taxon>Bacillus</taxon>
        <taxon>Bacillus cereus group</taxon>
    </lineage>
</organism>
<gene>
    <name evidence="1" type="primary">mqo</name>
    <name type="ordered locus">BCAH820_2970</name>
</gene>
<feature type="chain" id="PRO_1000191309" description="Probable malate:quinone oxidoreductase">
    <location>
        <begin position="1"/>
        <end position="500"/>
    </location>
</feature>
<comment type="catalytic activity">
    <reaction evidence="1">
        <text>(S)-malate + a quinone = a quinol + oxaloacetate</text>
        <dbReference type="Rhea" id="RHEA:46012"/>
        <dbReference type="ChEBI" id="CHEBI:15589"/>
        <dbReference type="ChEBI" id="CHEBI:16452"/>
        <dbReference type="ChEBI" id="CHEBI:24646"/>
        <dbReference type="ChEBI" id="CHEBI:132124"/>
        <dbReference type="EC" id="1.1.5.4"/>
    </reaction>
</comment>
<comment type="cofactor">
    <cofactor evidence="1">
        <name>FAD</name>
        <dbReference type="ChEBI" id="CHEBI:57692"/>
    </cofactor>
</comment>
<comment type="pathway">
    <text evidence="1">Carbohydrate metabolism; tricarboxylic acid cycle; oxaloacetate from (S)-malate (quinone route): step 1/1.</text>
</comment>
<comment type="similarity">
    <text evidence="1">Belongs to the MQO family.</text>
</comment>